<comment type="catalytic activity">
    <reaction evidence="1">
        <text>D-erythro-1-(imidazol-4-yl)glycerol 3-phosphate = 3-(imidazol-4-yl)-2-oxopropyl phosphate + H2O</text>
        <dbReference type="Rhea" id="RHEA:11040"/>
        <dbReference type="ChEBI" id="CHEBI:15377"/>
        <dbReference type="ChEBI" id="CHEBI:57766"/>
        <dbReference type="ChEBI" id="CHEBI:58278"/>
        <dbReference type="EC" id="4.2.1.19"/>
    </reaction>
</comment>
<comment type="pathway">
    <text evidence="1">Amino-acid biosynthesis; L-histidine biosynthesis; L-histidine from 5-phospho-alpha-D-ribose 1-diphosphate: step 6/9.</text>
</comment>
<comment type="subcellular location">
    <subcellularLocation>
        <location evidence="1">Cytoplasm</location>
    </subcellularLocation>
</comment>
<comment type="similarity">
    <text evidence="1">Belongs to the imidazoleglycerol-phosphate dehydratase family.</text>
</comment>
<feature type="chain" id="PRO_0000158121" description="Imidazoleglycerol-phosphate dehydratase">
    <location>
        <begin position="1"/>
        <end position="196"/>
    </location>
</feature>
<organism>
    <name type="scientific">Caulobacter vibrioides (strain ATCC 19089 / CIP 103742 / CB 15)</name>
    <name type="common">Caulobacter crescentus</name>
    <dbReference type="NCBI Taxonomy" id="190650"/>
    <lineage>
        <taxon>Bacteria</taxon>
        <taxon>Pseudomonadati</taxon>
        <taxon>Pseudomonadota</taxon>
        <taxon>Alphaproteobacteria</taxon>
        <taxon>Caulobacterales</taxon>
        <taxon>Caulobacteraceae</taxon>
        <taxon>Caulobacter</taxon>
    </lineage>
</organism>
<protein>
    <recommendedName>
        <fullName evidence="1">Imidazoleglycerol-phosphate dehydratase</fullName>
        <shortName evidence="1">IGPD</shortName>
        <ecNumber evidence="1">4.2.1.19</ecNumber>
    </recommendedName>
</protein>
<evidence type="ECO:0000255" key="1">
    <source>
        <dbReference type="HAMAP-Rule" id="MF_00076"/>
    </source>
</evidence>
<keyword id="KW-0028">Amino-acid biosynthesis</keyword>
<keyword id="KW-0963">Cytoplasm</keyword>
<keyword id="KW-0368">Histidine biosynthesis</keyword>
<keyword id="KW-0456">Lyase</keyword>
<keyword id="KW-1185">Reference proteome</keyword>
<reference key="1">
    <citation type="journal article" date="2001" name="Proc. Natl. Acad. Sci. U.S.A.">
        <title>Complete genome sequence of Caulobacter crescentus.</title>
        <authorList>
            <person name="Nierman W.C."/>
            <person name="Feldblyum T.V."/>
            <person name="Laub M.T."/>
            <person name="Paulsen I.T."/>
            <person name="Nelson K.E."/>
            <person name="Eisen J.A."/>
            <person name="Heidelberg J.F."/>
            <person name="Alley M.R.K."/>
            <person name="Ohta N."/>
            <person name="Maddock J.R."/>
            <person name="Potocka I."/>
            <person name="Nelson W.C."/>
            <person name="Newton A."/>
            <person name="Stephens C."/>
            <person name="Phadke N.D."/>
            <person name="Ely B."/>
            <person name="DeBoy R.T."/>
            <person name="Dodson R.J."/>
            <person name="Durkin A.S."/>
            <person name="Gwinn M.L."/>
            <person name="Haft D.H."/>
            <person name="Kolonay J.F."/>
            <person name="Smit J."/>
            <person name="Craven M.B."/>
            <person name="Khouri H.M."/>
            <person name="Shetty J."/>
            <person name="Berry K.J."/>
            <person name="Utterback T.R."/>
            <person name="Tran K."/>
            <person name="Wolf A.M."/>
            <person name="Vamathevan J.J."/>
            <person name="Ermolaeva M.D."/>
            <person name="White O."/>
            <person name="Salzberg S.L."/>
            <person name="Venter J.C."/>
            <person name="Shapiro L."/>
            <person name="Fraser C.M."/>
        </authorList>
    </citation>
    <scope>NUCLEOTIDE SEQUENCE [LARGE SCALE GENOMIC DNA]</scope>
    <source>
        <strain>ATCC 19089 / CIP 103742 / CB 15</strain>
    </source>
</reference>
<sequence>MARTAEVVRETKETQIRVWIDLDGTGVSTISTGIGFYDHMLESFARHGGFDLKVETKGDLHIDMHHTVEDTGIVLGQAIHKALDGFKGIRRFGSAYIPMDETLTRCAIDLSNRPYLIWKVEFKRPKVGEMDTELFKEFHHAFAMNSGACIHLETLYGDNTHHVAESGFKALARALRQAVEIDPKTGGQAPSTKGVL</sequence>
<proteinExistence type="inferred from homology"/>
<gene>
    <name evidence="1" type="primary">hisB</name>
    <name type="ordered locus">CC_3734</name>
</gene>
<name>HIS7_CAUVC</name>
<accession>Q9A232</accession>
<dbReference type="EC" id="4.2.1.19" evidence="1"/>
<dbReference type="EMBL" id="AE005673">
    <property type="protein sequence ID" value="AAK25696.1"/>
    <property type="molecule type" value="Genomic_DNA"/>
</dbReference>
<dbReference type="PIR" id="D87712">
    <property type="entry name" value="D87712"/>
</dbReference>
<dbReference type="RefSeq" id="NP_422528.1">
    <property type="nucleotide sequence ID" value="NC_002696.2"/>
</dbReference>
<dbReference type="RefSeq" id="WP_010921561.1">
    <property type="nucleotide sequence ID" value="NC_002696.2"/>
</dbReference>
<dbReference type="SMR" id="Q9A232"/>
<dbReference type="STRING" id="190650.CC_3734"/>
<dbReference type="EnsemblBacteria" id="AAK25696">
    <property type="protein sequence ID" value="AAK25696"/>
    <property type="gene ID" value="CC_3734"/>
</dbReference>
<dbReference type="KEGG" id="ccr:CC_3734"/>
<dbReference type="PATRIC" id="fig|190650.5.peg.3736"/>
<dbReference type="eggNOG" id="COG0131">
    <property type="taxonomic scope" value="Bacteria"/>
</dbReference>
<dbReference type="HOGENOM" id="CLU_044308_2_0_5"/>
<dbReference type="BioCyc" id="CAULO:CC3734-MONOMER"/>
<dbReference type="UniPathway" id="UPA00031">
    <property type="reaction ID" value="UER00011"/>
</dbReference>
<dbReference type="Proteomes" id="UP000001816">
    <property type="component" value="Chromosome"/>
</dbReference>
<dbReference type="GO" id="GO:0005737">
    <property type="term" value="C:cytoplasm"/>
    <property type="evidence" value="ECO:0007669"/>
    <property type="project" value="UniProtKB-SubCell"/>
</dbReference>
<dbReference type="GO" id="GO:0004424">
    <property type="term" value="F:imidazoleglycerol-phosphate dehydratase activity"/>
    <property type="evidence" value="ECO:0007669"/>
    <property type="project" value="UniProtKB-UniRule"/>
</dbReference>
<dbReference type="GO" id="GO:0000105">
    <property type="term" value="P:L-histidine biosynthetic process"/>
    <property type="evidence" value="ECO:0007669"/>
    <property type="project" value="UniProtKB-UniRule"/>
</dbReference>
<dbReference type="CDD" id="cd07914">
    <property type="entry name" value="IGPD"/>
    <property type="match status" value="1"/>
</dbReference>
<dbReference type="FunFam" id="3.30.230.40:FF:000001">
    <property type="entry name" value="Imidazoleglycerol-phosphate dehydratase HisB"/>
    <property type="match status" value="1"/>
</dbReference>
<dbReference type="FunFam" id="3.30.230.40:FF:000003">
    <property type="entry name" value="Imidazoleglycerol-phosphate dehydratase HisB"/>
    <property type="match status" value="1"/>
</dbReference>
<dbReference type="Gene3D" id="3.30.230.40">
    <property type="entry name" value="Imidazole glycerol phosphate dehydratase, domain 1"/>
    <property type="match status" value="2"/>
</dbReference>
<dbReference type="HAMAP" id="MF_00076">
    <property type="entry name" value="HisB"/>
    <property type="match status" value="1"/>
</dbReference>
<dbReference type="InterPro" id="IPR038494">
    <property type="entry name" value="IGPD_sf"/>
</dbReference>
<dbReference type="InterPro" id="IPR000807">
    <property type="entry name" value="ImidazoleglycerolP_deHydtase"/>
</dbReference>
<dbReference type="InterPro" id="IPR020565">
    <property type="entry name" value="ImidazoleglycerP_deHydtase_CS"/>
</dbReference>
<dbReference type="InterPro" id="IPR020568">
    <property type="entry name" value="Ribosomal_Su5_D2-typ_SF"/>
</dbReference>
<dbReference type="NCBIfam" id="NF002109">
    <property type="entry name" value="PRK00951.1-5"/>
    <property type="match status" value="1"/>
</dbReference>
<dbReference type="NCBIfam" id="NF002111">
    <property type="entry name" value="PRK00951.2-1"/>
    <property type="match status" value="1"/>
</dbReference>
<dbReference type="NCBIfam" id="NF002114">
    <property type="entry name" value="PRK00951.2-4"/>
    <property type="match status" value="1"/>
</dbReference>
<dbReference type="PANTHER" id="PTHR23133:SF2">
    <property type="entry name" value="IMIDAZOLEGLYCEROL-PHOSPHATE DEHYDRATASE"/>
    <property type="match status" value="1"/>
</dbReference>
<dbReference type="PANTHER" id="PTHR23133">
    <property type="entry name" value="IMIDAZOLEGLYCEROL-PHOSPHATE DEHYDRATASE HIS7"/>
    <property type="match status" value="1"/>
</dbReference>
<dbReference type="Pfam" id="PF00475">
    <property type="entry name" value="IGPD"/>
    <property type="match status" value="1"/>
</dbReference>
<dbReference type="SUPFAM" id="SSF54211">
    <property type="entry name" value="Ribosomal protein S5 domain 2-like"/>
    <property type="match status" value="2"/>
</dbReference>
<dbReference type="PROSITE" id="PS00954">
    <property type="entry name" value="IGP_DEHYDRATASE_1"/>
    <property type="match status" value="1"/>
</dbReference>
<dbReference type="PROSITE" id="PS00955">
    <property type="entry name" value="IGP_DEHYDRATASE_2"/>
    <property type="match status" value="1"/>
</dbReference>